<reference key="1">
    <citation type="journal article" date="2001" name="Mol. Phylogenet. Evol.">
        <title>Molecular systematics of bats of the genus Myotis (Vespertilionidae) suggests deterministic ecomorphological convergences.</title>
        <authorList>
            <person name="Ruedi M."/>
            <person name="Mayer F."/>
        </authorList>
    </citation>
    <scope>NUCLEOTIDE SEQUENCE [GENOMIC DNA]</scope>
    <source>
        <strain>Isolate TK 78925</strain>
        <strain>Isolate TK 78980</strain>
    </source>
</reference>
<protein>
    <recommendedName>
        <fullName>Cytochrome b</fullName>
    </recommendedName>
    <alternativeName>
        <fullName>Complex III subunit 3</fullName>
    </alternativeName>
    <alternativeName>
        <fullName>Complex III subunit III</fullName>
    </alternativeName>
    <alternativeName>
        <fullName>Cytochrome b-c1 complex subunit 3</fullName>
    </alternativeName>
    <alternativeName>
        <fullName>Ubiquinol-cytochrome-c reductase complex cytochrome b subunit</fullName>
    </alternativeName>
</protein>
<gene>
    <name type="primary">MT-CYB</name>
    <name type="synonym">COB</name>
    <name type="synonym">CYTB</name>
    <name type="synonym">MTCYB</name>
</gene>
<organism>
    <name type="scientific">Myotis volans</name>
    <name type="common">Long-legged myotis</name>
    <name type="synonym">Vespertilio volans</name>
    <dbReference type="NCBI Taxonomy" id="159335"/>
    <lineage>
        <taxon>Eukaryota</taxon>
        <taxon>Metazoa</taxon>
        <taxon>Chordata</taxon>
        <taxon>Craniata</taxon>
        <taxon>Vertebrata</taxon>
        <taxon>Euteleostomi</taxon>
        <taxon>Mammalia</taxon>
        <taxon>Eutheria</taxon>
        <taxon>Laurasiatheria</taxon>
        <taxon>Chiroptera</taxon>
        <taxon>Yangochiroptera</taxon>
        <taxon>Vespertilionidae</taxon>
        <taxon>Myotis</taxon>
    </lineage>
</organism>
<comment type="function">
    <text evidence="2">Component of the ubiquinol-cytochrome c reductase complex (complex III or cytochrome b-c1 complex) that is part of the mitochondrial respiratory chain. The b-c1 complex mediates electron transfer from ubiquinol to cytochrome c. Contributes to the generation of a proton gradient across the mitochondrial membrane that is then used for ATP synthesis.</text>
</comment>
<comment type="cofactor">
    <cofactor evidence="2">
        <name>heme b</name>
        <dbReference type="ChEBI" id="CHEBI:60344"/>
    </cofactor>
    <text evidence="2">Binds 2 heme b groups non-covalently.</text>
</comment>
<comment type="subunit">
    <text evidence="2">The cytochrome bc1 complex contains 11 subunits: 3 respiratory subunits (MT-CYB, CYC1 and UQCRFS1), 2 core proteins (UQCRC1 and UQCRC2) and 6 low-molecular weight proteins (UQCRH/QCR6, UQCRB/QCR7, UQCRQ/QCR8, UQCR10/QCR9, UQCR11/QCR10 and a cleavage product of UQCRFS1). This cytochrome bc1 complex then forms a dimer.</text>
</comment>
<comment type="subcellular location">
    <subcellularLocation>
        <location evidence="2">Mitochondrion inner membrane</location>
        <topology evidence="2">Multi-pass membrane protein</topology>
    </subcellularLocation>
</comment>
<comment type="miscellaneous">
    <text evidence="1">Heme 1 (or BL or b562) is low-potential and absorbs at about 562 nm, and heme 2 (or BH or b566) is high-potential and absorbs at about 566 nm.</text>
</comment>
<comment type="similarity">
    <text evidence="3 4">Belongs to the cytochrome b family.</text>
</comment>
<comment type="caution">
    <text evidence="2">The full-length protein contains only eight transmembrane helices, not nine as predicted by bioinformatics tools.</text>
</comment>
<proteinExistence type="inferred from homology"/>
<name>CYB_MYOVO</name>
<feature type="chain" id="PRO_0000061254" description="Cytochrome b">
    <location>
        <begin position="1"/>
        <end position="379"/>
    </location>
</feature>
<feature type="transmembrane region" description="Helical" evidence="2">
    <location>
        <begin position="33"/>
        <end position="53"/>
    </location>
</feature>
<feature type="transmembrane region" description="Helical" evidence="2">
    <location>
        <begin position="77"/>
        <end position="98"/>
    </location>
</feature>
<feature type="transmembrane region" description="Helical" evidence="2">
    <location>
        <begin position="113"/>
        <end position="133"/>
    </location>
</feature>
<feature type="transmembrane region" description="Helical" evidence="2">
    <location>
        <begin position="178"/>
        <end position="198"/>
    </location>
</feature>
<feature type="transmembrane region" description="Helical" evidence="2">
    <location>
        <begin position="226"/>
        <end position="246"/>
    </location>
</feature>
<feature type="transmembrane region" description="Helical" evidence="2">
    <location>
        <begin position="288"/>
        <end position="308"/>
    </location>
</feature>
<feature type="transmembrane region" description="Helical" evidence="2">
    <location>
        <begin position="320"/>
        <end position="340"/>
    </location>
</feature>
<feature type="transmembrane region" description="Helical" evidence="2">
    <location>
        <begin position="347"/>
        <end position="367"/>
    </location>
</feature>
<feature type="binding site" description="axial binding residue" evidence="2">
    <location>
        <position position="83"/>
    </location>
    <ligand>
        <name>heme b</name>
        <dbReference type="ChEBI" id="CHEBI:60344"/>
        <label>b562</label>
    </ligand>
    <ligandPart>
        <name>Fe</name>
        <dbReference type="ChEBI" id="CHEBI:18248"/>
    </ligandPart>
</feature>
<feature type="binding site" description="axial binding residue" evidence="2">
    <location>
        <position position="97"/>
    </location>
    <ligand>
        <name>heme b</name>
        <dbReference type="ChEBI" id="CHEBI:60344"/>
        <label>b566</label>
    </ligand>
    <ligandPart>
        <name>Fe</name>
        <dbReference type="ChEBI" id="CHEBI:18248"/>
    </ligandPart>
</feature>
<feature type="binding site" description="axial binding residue" evidence="2">
    <location>
        <position position="182"/>
    </location>
    <ligand>
        <name>heme b</name>
        <dbReference type="ChEBI" id="CHEBI:60344"/>
        <label>b562</label>
    </ligand>
    <ligandPart>
        <name>Fe</name>
        <dbReference type="ChEBI" id="CHEBI:18248"/>
    </ligandPart>
</feature>
<feature type="binding site" description="axial binding residue" evidence="2">
    <location>
        <position position="196"/>
    </location>
    <ligand>
        <name>heme b</name>
        <dbReference type="ChEBI" id="CHEBI:60344"/>
        <label>b566</label>
    </ligand>
    <ligandPart>
        <name>Fe</name>
        <dbReference type="ChEBI" id="CHEBI:18248"/>
    </ligandPart>
</feature>
<feature type="binding site" evidence="2">
    <location>
        <position position="201"/>
    </location>
    <ligand>
        <name>a ubiquinone</name>
        <dbReference type="ChEBI" id="CHEBI:16389"/>
    </ligand>
</feature>
<feature type="sequence variant" description="In strain: Isolate TK 78925.">
    <original>M</original>
    <variation>V</variation>
    <location>
        <position position="215"/>
    </location>
</feature>
<feature type="sequence variant" description="In strain: Isolate TK 78925.">
    <original>M</original>
    <variation>V</variation>
    <location>
        <position position="237"/>
    </location>
</feature>
<feature type="sequence variant" description="In strain: Isolate TK 78925.">
    <original>M</original>
    <variation>T</variation>
    <location>
        <position position="241"/>
    </location>
</feature>
<feature type="sequence variant" description="In strain: Isolate TK 78925.">
    <original>T</original>
    <variation>A</variation>
    <location>
        <position position="316"/>
    </location>
</feature>
<feature type="sequence variant" description="In strain: Isolate TK 78925.">
    <original>H</original>
    <variation>Y</variation>
    <location>
        <position position="375"/>
    </location>
</feature>
<accession>Q956Z1</accession>
<accession>Q956Z0</accession>
<evidence type="ECO:0000250" key="1"/>
<evidence type="ECO:0000250" key="2">
    <source>
        <dbReference type="UniProtKB" id="P00157"/>
    </source>
</evidence>
<evidence type="ECO:0000255" key="3">
    <source>
        <dbReference type="PROSITE-ProRule" id="PRU00967"/>
    </source>
</evidence>
<evidence type="ECO:0000255" key="4">
    <source>
        <dbReference type="PROSITE-ProRule" id="PRU00968"/>
    </source>
</evidence>
<dbReference type="EMBL" id="AF376871">
    <property type="protein sequence ID" value="AAK57690.1"/>
    <property type="molecule type" value="Genomic_DNA"/>
</dbReference>
<dbReference type="EMBL" id="AF376872">
    <property type="protein sequence ID" value="AAK57691.1"/>
    <property type="molecule type" value="Genomic_DNA"/>
</dbReference>
<dbReference type="GO" id="GO:0005743">
    <property type="term" value="C:mitochondrial inner membrane"/>
    <property type="evidence" value="ECO:0007669"/>
    <property type="project" value="UniProtKB-SubCell"/>
</dbReference>
<dbReference type="GO" id="GO:0045275">
    <property type="term" value="C:respiratory chain complex III"/>
    <property type="evidence" value="ECO:0007669"/>
    <property type="project" value="InterPro"/>
</dbReference>
<dbReference type="GO" id="GO:0046872">
    <property type="term" value="F:metal ion binding"/>
    <property type="evidence" value="ECO:0007669"/>
    <property type="project" value="UniProtKB-KW"/>
</dbReference>
<dbReference type="GO" id="GO:0008121">
    <property type="term" value="F:ubiquinol-cytochrome-c reductase activity"/>
    <property type="evidence" value="ECO:0007669"/>
    <property type="project" value="InterPro"/>
</dbReference>
<dbReference type="GO" id="GO:0006122">
    <property type="term" value="P:mitochondrial electron transport, ubiquinol to cytochrome c"/>
    <property type="evidence" value="ECO:0007669"/>
    <property type="project" value="TreeGrafter"/>
</dbReference>
<dbReference type="CDD" id="cd00290">
    <property type="entry name" value="cytochrome_b_C"/>
    <property type="match status" value="1"/>
</dbReference>
<dbReference type="CDD" id="cd00284">
    <property type="entry name" value="Cytochrome_b_N"/>
    <property type="match status" value="1"/>
</dbReference>
<dbReference type="FunFam" id="1.20.810.10:FF:000002">
    <property type="entry name" value="Cytochrome b"/>
    <property type="match status" value="1"/>
</dbReference>
<dbReference type="Gene3D" id="1.20.810.10">
    <property type="entry name" value="Cytochrome Bc1 Complex, Chain C"/>
    <property type="match status" value="1"/>
</dbReference>
<dbReference type="InterPro" id="IPR005798">
    <property type="entry name" value="Cyt_b/b6_C"/>
</dbReference>
<dbReference type="InterPro" id="IPR036150">
    <property type="entry name" value="Cyt_b/b6_C_sf"/>
</dbReference>
<dbReference type="InterPro" id="IPR005797">
    <property type="entry name" value="Cyt_b/b6_N"/>
</dbReference>
<dbReference type="InterPro" id="IPR027387">
    <property type="entry name" value="Cytb/b6-like_sf"/>
</dbReference>
<dbReference type="InterPro" id="IPR030689">
    <property type="entry name" value="Cytochrome_b"/>
</dbReference>
<dbReference type="InterPro" id="IPR048260">
    <property type="entry name" value="Cytochrome_b_C_euk/bac"/>
</dbReference>
<dbReference type="InterPro" id="IPR048259">
    <property type="entry name" value="Cytochrome_b_N_euk/bac"/>
</dbReference>
<dbReference type="InterPro" id="IPR016174">
    <property type="entry name" value="Di-haem_cyt_TM"/>
</dbReference>
<dbReference type="PANTHER" id="PTHR19271">
    <property type="entry name" value="CYTOCHROME B"/>
    <property type="match status" value="1"/>
</dbReference>
<dbReference type="PANTHER" id="PTHR19271:SF16">
    <property type="entry name" value="CYTOCHROME B"/>
    <property type="match status" value="1"/>
</dbReference>
<dbReference type="Pfam" id="PF00032">
    <property type="entry name" value="Cytochrom_B_C"/>
    <property type="match status" value="1"/>
</dbReference>
<dbReference type="Pfam" id="PF00033">
    <property type="entry name" value="Cytochrome_B"/>
    <property type="match status" value="1"/>
</dbReference>
<dbReference type="PIRSF" id="PIRSF038885">
    <property type="entry name" value="COB"/>
    <property type="match status" value="1"/>
</dbReference>
<dbReference type="SUPFAM" id="SSF81648">
    <property type="entry name" value="a domain/subunit of cytochrome bc1 complex (Ubiquinol-cytochrome c reductase)"/>
    <property type="match status" value="1"/>
</dbReference>
<dbReference type="SUPFAM" id="SSF81342">
    <property type="entry name" value="Transmembrane di-heme cytochromes"/>
    <property type="match status" value="1"/>
</dbReference>
<dbReference type="PROSITE" id="PS51003">
    <property type="entry name" value="CYTB_CTER"/>
    <property type="match status" value="1"/>
</dbReference>
<dbReference type="PROSITE" id="PS51002">
    <property type="entry name" value="CYTB_NTER"/>
    <property type="match status" value="1"/>
</dbReference>
<keyword id="KW-0249">Electron transport</keyword>
<keyword id="KW-0349">Heme</keyword>
<keyword id="KW-0408">Iron</keyword>
<keyword id="KW-0472">Membrane</keyword>
<keyword id="KW-0479">Metal-binding</keyword>
<keyword id="KW-0496">Mitochondrion</keyword>
<keyword id="KW-0999">Mitochondrion inner membrane</keyword>
<keyword id="KW-0679">Respiratory chain</keyword>
<keyword id="KW-0812">Transmembrane</keyword>
<keyword id="KW-1133">Transmembrane helix</keyword>
<keyword id="KW-0813">Transport</keyword>
<keyword id="KW-0830">Ubiquinone</keyword>
<geneLocation type="mitochondrion"/>
<sequence length="379" mass="42842">MTNIRXSHPLMKIINSSFXDLPAPSNISSWWNFGSLLGICLALQILTGLFLAMHYTSDTATAFNSVTHICRDVNYGWVLRYLHANGASMFFICLYLHVGRGLYYGSYMYTETWNIGVILLFAVMATAFMGYVLPWGQMSFWGATVITNLLSAIPYIGTDLVEWIWGGFSVDKATLTRFFAFHFLLPFIIAAMVMVHLLFLHETGSNNPTGIPSNMDMIPFHPYYTIKDILGLLLMIMALLMLVLFSPDMLGDPDNYTPANPLNTPPHIKPEWYFLFAYAILRSIPNKLGGVLALVLSILILIIVPLLHTSKQRSMTFRPLSQCLFWLLTADLFTLTWIGGQPVEHPYVIIGQLASILYFSIIIILMPLTSLMENHLLKW</sequence>